<feature type="chain" id="PRO_0000187951" description="ATP-dependent dethiobiotin synthetase BioD">
    <location>
        <begin position="1"/>
        <end position="212"/>
    </location>
</feature>
<feature type="active site" evidence="1">
    <location>
        <position position="33"/>
    </location>
</feature>
<feature type="binding site" evidence="1">
    <location>
        <begin position="13"/>
        <end position="18"/>
    </location>
    <ligand>
        <name>ATP</name>
        <dbReference type="ChEBI" id="CHEBI:30616"/>
    </ligand>
</feature>
<feature type="binding site" evidence="1">
    <location>
        <position position="17"/>
    </location>
    <ligand>
        <name>Mg(2+)</name>
        <dbReference type="ChEBI" id="CHEBI:18420"/>
    </ligand>
</feature>
<feature type="binding site" evidence="1">
    <location>
        <position position="37"/>
    </location>
    <ligand>
        <name>substrate</name>
    </ligand>
</feature>
<feature type="binding site" evidence="1">
    <location>
        <begin position="100"/>
        <end position="103"/>
    </location>
    <ligand>
        <name>ATP</name>
        <dbReference type="ChEBI" id="CHEBI:30616"/>
    </ligand>
</feature>
<feature type="binding site" evidence="1">
    <location>
        <position position="100"/>
    </location>
    <ligand>
        <name>Mg(2+)</name>
        <dbReference type="ChEBI" id="CHEBI:18420"/>
    </ligand>
</feature>
<feature type="binding site" evidence="1">
    <location>
        <begin position="184"/>
        <end position="186"/>
    </location>
    <ligand>
        <name>ATP</name>
        <dbReference type="ChEBI" id="CHEBI:30616"/>
    </ligand>
</feature>
<keyword id="KW-0067">ATP-binding</keyword>
<keyword id="KW-0093">Biotin biosynthesis</keyword>
<keyword id="KW-0963">Cytoplasm</keyword>
<keyword id="KW-0436">Ligase</keyword>
<keyword id="KW-0460">Magnesium</keyword>
<keyword id="KW-0479">Metal-binding</keyword>
<keyword id="KW-0547">Nucleotide-binding</keyword>
<evidence type="ECO:0000255" key="1">
    <source>
        <dbReference type="HAMAP-Rule" id="MF_00336"/>
    </source>
</evidence>
<sequence>MNSRLIVTGTDTGIGKTVFSAALCHALGAAYWKPVQSGLEEETDSEIVARLAQASPQRILPEAWRLNTPASPHLSARLDGVEIRPEEMHIPATSLPLVIEGAGGLLVPLNDKTLFADLFAIWRIPAILCARAALGTINHTLLSLEAMRSRDIPVLGVAFIGEANEDTETTIAHLGRVKRLGRLPLLDDLSPEKLHHSFARNFHIDDFAGVAR</sequence>
<accession>Q8FWG5</accession>
<accession>G0KCM2</accession>
<protein>
    <recommendedName>
        <fullName evidence="1">ATP-dependent dethiobiotin synthetase BioD</fullName>
        <ecNumber evidence="1">6.3.3.3</ecNumber>
    </recommendedName>
    <alternativeName>
        <fullName evidence="1">DTB synthetase</fullName>
        <shortName evidence="1">DTBS</shortName>
    </alternativeName>
    <alternativeName>
        <fullName evidence="1">Dethiobiotin synthase</fullName>
    </alternativeName>
</protein>
<name>BIOD_BRUSU</name>
<comment type="function">
    <text evidence="1">Catalyzes a mechanistically unusual reaction, the ATP-dependent insertion of CO2 between the N7 and N8 nitrogen atoms of 7,8-diaminopelargonic acid (DAPA, also called 7,8-diammoniononanoate) to form a ureido ring.</text>
</comment>
<comment type="catalytic activity">
    <reaction evidence="1">
        <text>(7R,8S)-7,8-diammoniononanoate + CO2 + ATP = (4R,5S)-dethiobiotin + ADP + phosphate + 3 H(+)</text>
        <dbReference type="Rhea" id="RHEA:15805"/>
        <dbReference type="ChEBI" id="CHEBI:15378"/>
        <dbReference type="ChEBI" id="CHEBI:16526"/>
        <dbReference type="ChEBI" id="CHEBI:30616"/>
        <dbReference type="ChEBI" id="CHEBI:43474"/>
        <dbReference type="ChEBI" id="CHEBI:149469"/>
        <dbReference type="ChEBI" id="CHEBI:149473"/>
        <dbReference type="ChEBI" id="CHEBI:456216"/>
        <dbReference type="EC" id="6.3.3.3"/>
    </reaction>
</comment>
<comment type="cofactor">
    <cofactor evidence="1">
        <name>Mg(2+)</name>
        <dbReference type="ChEBI" id="CHEBI:18420"/>
    </cofactor>
</comment>
<comment type="pathway">
    <text evidence="1">Cofactor biosynthesis; biotin biosynthesis; biotin from 7,8-diaminononanoate: step 1/2.</text>
</comment>
<comment type="subunit">
    <text evidence="1">Homodimer.</text>
</comment>
<comment type="subcellular location">
    <subcellularLocation>
        <location evidence="1">Cytoplasm</location>
    </subcellularLocation>
</comment>
<comment type="similarity">
    <text evidence="1">Belongs to the dethiobiotin synthetase family.</text>
</comment>
<organism>
    <name type="scientific">Brucella suis biovar 1 (strain 1330)</name>
    <dbReference type="NCBI Taxonomy" id="204722"/>
    <lineage>
        <taxon>Bacteria</taxon>
        <taxon>Pseudomonadati</taxon>
        <taxon>Pseudomonadota</taxon>
        <taxon>Alphaproteobacteria</taxon>
        <taxon>Hyphomicrobiales</taxon>
        <taxon>Brucellaceae</taxon>
        <taxon>Brucella/Ochrobactrum group</taxon>
        <taxon>Brucella</taxon>
    </lineage>
</organism>
<gene>
    <name evidence="1" type="primary">bioD</name>
    <name type="ordered locus">BRA0490</name>
    <name type="ordered locus">BS1330_II0486</name>
</gene>
<reference key="1">
    <citation type="journal article" date="2002" name="Proc. Natl. Acad. Sci. U.S.A.">
        <title>The Brucella suis genome reveals fundamental similarities between animal and plant pathogens and symbionts.</title>
        <authorList>
            <person name="Paulsen I.T."/>
            <person name="Seshadri R."/>
            <person name="Nelson K.E."/>
            <person name="Eisen J.A."/>
            <person name="Heidelberg J.F."/>
            <person name="Read T.D."/>
            <person name="Dodson R.J."/>
            <person name="Umayam L.A."/>
            <person name="Brinkac L.M."/>
            <person name="Beanan M.J."/>
            <person name="Daugherty S.C."/>
            <person name="DeBoy R.T."/>
            <person name="Durkin A.S."/>
            <person name="Kolonay J.F."/>
            <person name="Madupu R."/>
            <person name="Nelson W.C."/>
            <person name="Ayodeji B."/>
            <person name="Kraul M."/>
            <person name="Shetty J."/>
            <person name="Malek J.A."/>
            <person name="Van Aken S.E."/>
            <person name="Riedmuller S."/>
            <person name="Tettelin H."/>
            <person name="Gill S.R."/>
            <person name="White O."/>
            <person name="Salzberg S.L."/>
            <person name="Hoover D.L."/>
            <person name="Lindler L.E."/>
            <person name="Halling S.M."/>
            <person name="Boyle S.M."/>
            <person name="Fraser C.M."/>
        </authorList>
    </citation>
    <scope>NUCLEOTIDE SEQUENCE [LARGE SCALE GENOMIC DNA]</scope>
    <source>
        <strain>1330</strain>
    </source>
</reference>
<reference key="2">
    <citation type="journal article" date="2011" name="J. Bacteriol.">
        <title>Revised genome sequence of Brucella suis 1330.</title>
        <authorList>
            <person name="Tae H."/>
            <person name="Shallom S."/>
            <person name="Settlage R."/>
            <person name="Preston D."/>
            <person name="Adams L.G."/>
            <person name="Garner H.R."/>
        </authorList>
    </citation>
    <scope>NUCLEOTIDE SEQUENCE [LARGE SCALE GENOMIC DNA]</scope>
    <source>
        <strain>1330</strain>
    </source>
</reference>
<proteinExistence type="inferred from homology"/>
<dbReference type="EC" id="6.3.3.3" evidence="1"/>
<dbReference type="EMBL" id="AE014292">
    <property type="protein sequence ID" value="AAN33682.1"/>
    <property type="molecule type" value="Genomic_DNA"/>
</dbReference>
<dbReference type="EMBL" id="CP002998">
    <property type="protein sequence ID" value="AEM19960.1"/>
    <property type="molecule type" value="Genomic_DNA"/>
</dbReference>
<dbReference type="RefSeq" id="WP_004688969.1">
    <property type="nucleotide sequence ID" value="NZ_KN046805.1"/>
</dbReference>
<dbReference type="SMR" id="Q8FWG5"/>
<dbReference type="GeneID" id="97535376"/>
<dbReference type="KEGG" id="bms:BRA0490"/>
<dbReference type="KEGG" id="bsi:BS1330_II0486"/>
<dbReference type="PATRIC" id="fig|204722.21.peg.2199"/>
<dbReference type="HOGENOM" id="CLU_072551_2_0_5"/>
<dbReference type="PhylomeDB" id="Q8FWG5"/>
<dbReference type="UniPathway" id="UPA00078">
    <property type="reaction ID" value="UER00161"/>
</dbReference>
<dbReference type="Proteomes" id="UP000007104">
    <property type="component" value="Chromosome II"/>
</dbReference>
<dbReference type="GO" id="GO:0005829">
    <property type="term" value="C:cytosol"/>
    <property type="evidence" value="ECO:0007669"/>
    <property type="project" value="TreeGrafter"/>
</dbReference>
<dbReference type="GO" id="GO:0005524">
    <property type="term" value="F:ATP binding"/>
    <property type="evidence" value="ECO:0007669"/>
    <property type="project" value="UniProtKB-UniRule"/>
</dbReference>
<dbReference type="GO" id="GO:0004141">
    <property type="term" value="F:dethiobiotin synthase activity"/>
    <property type="evidence" value="ECO:0007669"/>
    <property type="project" value="UniProtKB-UniRule"/>
</dbReference>
<dbReference type="GO" id="GO:0000287">
    <property type="term" value="F:magnesium ion binding"/>
    <property type="evidence" value="ECO:0007669"/>
    <property type="project" value="UniProtKB-UniRule"/>
</dbReference>
<dbReference type="GO" id="GO:0009102">
    <property type="term" value="P:biotin biosynthetic process"/>
    <property type="evidence" value="ECO:0007669"/>
    <property type="project" value="UniProtKB-UniRule"/>
</dbReference>
<dbReference type="CDD" id="cd03109">
    <property type="entry name" value="DTBS"/>
    <property type="match status" value="1"/>
</dbReference>
<dbReference type="Gene3D" id="3.40.50.300">
    <property type="entry name" value="P-loop containing nucleotide triphosphate hydrolases"/>
    <property type="match status" value="1"/>
</dbReference>
<dbReference type="HAMAP" id="MF_00336">
    <property type="entry name" value="BioD"/>
    <property type="match status" value="1"/>
</dbReference>
<dbReference type="InterPro" id="IPR004472">
    <property type="entry name" value="DTB_synth_BioD"/>
</dbReference>
<dbReference type="InterPro" id="IPR027417">
    <property type="entry name" value="P-loop_NTPase"/>
</dbReference>
<dbReference type="NCBIfam" id="TIGR00347">
    <property type="entry name" value="bioD"/>
    <property type="match status" value="1"/>
</dbReference>
<dbReference type="PANTHER" id="PTHR43210:SF2">
    <property type="entry name" value="ATP-DEPENDENT DETHIOBIOTIN SYNTHETASE BIOD 2"/>
    <property type="match status" value="1"/>
</dbReference>
<dbReference type="PANTHER" id="PTHR43210">
    <property type="entry name" value="DETHIOBIOTIN SYNTHETASE"/>
    <property type="match status" value="1"/>
</dbReference>
<dbReference type="Pfam" id="PF13500">
    <property type="entry name" value="AAA_26"/>
    <property type="match status" value="1"/>
</dbReference>
<dbReference type="PIRSF" id="PIRSF006755">
    <property type="entry name" value="DTB_synth"/>
    <property type="match status" value="1"/>
</dbReference>
<dbReference type="SUPFAM" id="SSF52540">
    <property type="entry name" value="P-loop containing nucleoside triphosphate hydrolases"/>
    <property type="match status" value="1"/>
</dbReference>